<feature type="chain" id="PRO_0000380076" description="Uncharacterized membrane protein YfzA">
    <location>
        <begin position="1"/>
        <end position="88"/>
    </location>
</feature>
<feature type="transmembrane region" description="Helical" evidence="1">
    <location>
        <begin position="13"/>
        <end position="33"/>
    </location>
</feature>
<feature type="transmembrane region" description="Helical" evidence="1">
    <location>
        <begin position="62"/>
        <end position="82"/>
    </location>
</feature>
<protein>
    <recommendedName>
        <fullName>Uncharacterized membrane protein YfzA</fullName>
    </recommendedName>
</protein>
<keyword id="KW-1003">Cell membrane</keyword>
<keyword id="KW-0472">Membrane</keyword>
<keyword id="KW-1185">Reference proteome</keyword>
<keyword id="KW-0812">Transmembrane</keyword>
<keyword id="KW-1133">Transmembrane helix</keyword>
<comment type="subcellular location">
    <subcellularLocation>
        <location evidence="2">Cell membrane</location>
        <topology evidence="2">Multi-pass membrane protein</topology>
    </subcellularLocation>
</comment>
<evidence type="ECO:0000255" key="1"/>
<evidence type="ECO:0000305" key="2"/>
<accession>C0H3X6</accession>
<sequence>MDKVYKRSWFQTFLAFLVSQLYFNFVELTGWGPKYREMNGFPANIVELDFFQTYLSFYDNPWFNIITVFLGVFTIIQIITGITKDIRN</sequence>
<reference key="1">
    <citation type="journal article" date="1997" name="Nature">
        <title>The complete genome sequence of the Gram-positive bacterium Bacillus subtilis.</title>
        <authorList>
            <person name="Kunst F."/>
            <person name="Ogasawara N."/>
            <person name="Moszer I."/>
            <person name="Albertini A.M."/>
            <person name="Alloni G."/>
            <person name="Azevedo V."/>
            <person name="Bertero M.G."/>
            <person name="Bessieres P."/>
            <person name="Bolotin A."/>
            <person name="Borchert S."/>
            <person name="Borriss R."/>
            <person name="Boursier L."/>
            <person name="Brans A."/>
            <person name="Braun M."/>
            <person name="Brignell S.C."/>
            <person name="Bron S."/>
            <person name="Brouillet S."/>
            <person name="Bruschi C.V."/>
            <person name="Caldwell B."/>
            <person name="Capuano V."/>
            <person name="Carter N.M."/>
            <person name="Choi S.-K."/>
            <person name="Codani J.-J."/>
            <person name="Connerton I.F."/>
            <person name="Cummings N.J."/>
            <person name="Daniel R.A."/>
            <person name="Denizot F."/>
            <person name="Devine K.M."/>
            <person name="Duesterhoeft A."/>
            <person name="Ehrlich S.D."/>
            <person name="Emmerson P.T."/>
            <person name="Entian K.-D."/>
            <person name="Errington J."/>
            <person name="Fabret C."/>
            <person name="Ferrari E."/>
            <person name="Foulger D."/>
            <person name="Fritz C."/>
            <person name="Fujita M."/>
            <person name="Fujita Y."/>
            <person name="Fuma S."/>
            <person name="Galizzi A."/>
            <person name="Galleron N."/>
            <person name="Ghim S.-Y."/>
            <person name="Glaser P."/>
            <person name="Goffeau A."/>
            <person name="Golightly E.J."/>
            <person name="Grandi G."/>
            <person name="Guiseppi G."/>
            <person name="Guy B.J."/>
            <person name="Haga K."/>
            <person name="Haiech J."/>
            <person name="Harwood C.R."/>
            <person name="Henaut A."/>
            <person name="Hilbert H."/>
            <person name="Holsappel S."/>
            <person name="Hosono S."/>
            <person name="Hullo M.-F."/>
            <person name="Itaya M."/>
            <person name="Jones L.-M."/>
            <person name="Joris B."/>
            <person name="Karamata D."/>
            <person name="Kasahara Y."/>
            <person name="Klaerr-Blanchard M."/>
            <person name="Klein C."/>
            <person name="Kobayashi Y."/>
            <person name="Koetter P."/>
            <person name="Koningstein G."/>
            <person name="Krogh S."/>
            <person name="Kumano M."/>
            <person name="Kurita K."/>
            <person name="Lapidus A."/>
            <person name="Lardinois S."/>
            <person name="Lauber J."/>
            <person name="Lazarevic V."/>
            <person name="Lee S.-M."/>
            <person name="Levine A."/>
            <person name="Liu H."/>
            <person name="Masuda S."/>
            <person name="Mauel C."/>
            <person name="Medigue C."/>
            <person name="Medina N."/>
            <person name="Mellado R.P."/>
            <person name="Mizuno M."/>
            <person name="Moestl D."/>
            <person name="Nakai S."/>
            <person name="Noback M."/>
            <person name="Noone D."/>
            <person name="O'Reilly M."/>
            <person name="Ogawa K."/>
            <person name="Ogiwara A."/>
            <person name="Oudega B."/>
            <person name="Park S.-H."/>
            <person name="Parro V."/>
            <person name="Pohl T.M."/>
            <person name="Portetelle D."/>
            <person name="Porwollik S."/>
            <person name="Prescott A.M."/>
            <person name="Presecan E."/>
            <person name="Pujic P."/>
            <person name="Purnelle B."/>
            <person name="Rapoport G."/>
            <person name="Rey M."/>
            <person name="Reynolds S."/>
            <person name="Rieger M."/>
            <person name="Rivolta C."/>
            <person name="Rocha E."/>
            <person name="Roche B."/>
            <person name="Rose M."/>
            <person name="Sadaie Y."/>
            <person name="Sato T."/>
            <person name="Scanlan E."/>
            <person name="Schleich S."/>
            <person name="Schroeter R."/>
            <person name="Scoffone F."/>
            <person name="Sekiguchi J."/>
            <person name="Sekowska A."/>
            <person name="Seror S.J."/>
            <person name="Serror P."/>
            <person name="Shin B.-S."/>
            <person name="Soldo B."/>
            <person name="Sorokin A."/>
            <person name="Tacconi E."/>
            <person name="Takagi T."/>
            <person name="Takahashi H."/>
            <person name="Takemaru K."/>
            <person name="Takeuchi M."/>
            <person name="Tamakoshi A."/>
            <person name="Tanaka T."/>
            <person name="Terpstra P."/>
            <person name="Tognoni A."/>
            <person name="Tosato V."/>
            <person name="Uchiyama S."/>
            <person name="Vandenbol M."/>
            <person name="Vannier F."/>
            <person name="Vassarotti A."/>
            <person name="Viari A."/>
            <person name="Wambutt R."/>
            <person name="Wedler E."/>
            <person name="Wedler H."/>
            <person name="Weitzenegger T."/>
            <person name="Winters P."/>
            <person name="Wipat A."/>
            <person name="Yamamoto H."/>
            <person name="Yamane K."/>
            <person name="Yasumoto K."/>
            <person name="Yata K."/>
            <person name="Yoshida K."/>
            <person name="Yoshikawa H.-F."/>
            <person name="Zumstein E."/>
            <person name="Yoshikawa H."/>
            <person name="Danchin A."/>
        </authorList>
    </citation>
    <scope>NUCLEOTIDE SEQUENCE [LARGE SCALE GENOMIC DNA]</scope>
    <source>
        <strain>168</strain>
    </source>
</reference>
<proteinExistence type="predicted"/>
<gene>
    <name type="primary">yfzA</name>
    <name type="ordered locus">BSU08029</name>
</gene>
<dbReference type="EMBL" id="AL009126">
    <property type="protein sequence ID" value="CAX52581.1"/>
    <property type="molecule type" value="Genomic_DNA"/>
</dbReference>
<dbReference type="RefSeq" id="WP_009966802.1">
    <property type="nucleotide sequence ID" value="NZ_OZ025638.1"/>
</dbReference>
<dbReference type="RefSeq" id="YP_003097694.1">
    <property type="nucleotide sequence ID" value="NC_000964.3"/>
</dbReference>
<dbReference type="FunCoup" id="C0H3X6">
    <property type="interactions" value="10"/>
</dbReference>
<dbReference type="PaxDb" id="224308-BSU08029"/>
<dbReference type="EnsemblBacteria" id="CAX52581">
    <property type="protein sequence ID" value="CAX52581"/>
    <property type="gene ID" value="BSU_08029"/>
</dbReference>
<dbReference type="GeneID" id="8302973"/>
<dbReference type="KEGG" id="bsu:BSU08029"/>
<dbReference type="PATRIC" id="fig|224308.179.peg.868"/>
<dbReference type="InParanoid" id="C0H3X6"/>
<dbReference type="OrthoDB" id="2638799at2"/>
<dbReference type="BioCyc" id="BSUB:BSU08029-MONOMER"/>
<dbReference type="Proteomes" id="UP000001570">
    <property type="component" value="Chromosome"/>
</dbReference>
<dbReference type="GO" id="GO:0005886">
    <property type="term" value="C:plasma membrane"/>
    <property type="evidence" value="ECO:0007669"/>
    <property type="project" value="UniProtKB-SubCell"/>
</dbReference>
<dbReference type="InterPro" id="IPR025627">
    <property type="entry name" value="YfzA"/>
</dbReference>
<dbReference type="Pfam" id="PF14118">
    <property type="entry name" value="YfzA"/>
    <property type="match status" value="1"/>
</dbReference>
<name>YFZA_BACSU</name>
<organism>
    <name type="scientific">Bacillus subtilis (strain 168)</name>
    <dbReference type="NCBI Taxonomy" id="224308"/>
    <lineage>
        <taxon>Bacteria</taxon>
        <taxon>Bacillati</taxon>
        <taxon>Bacillota</taxon>
        <taxon>Bacilli</taxon>
        <taxon>Bacillales</taxon>
        <taxon>Bacillaceae</taxon>
        <taxon>Bacillus</taxon>
    </lineage>
</organism>